<organism>
    <name type="scientific">Tolumonas auensis (strain DSM 9187 / NBRC 110442 / TA 4)</name>
    <dbReference type="NCBI Taxonomy" id="595494"/>
    <lineage>
        <taxon>Bacteria</taxon>
        <taxon>Pseudomonadati</taxon>
        <taxon>Pseudomonadota</taxon>
        <taxon>Gammaproteobacteria</taxon>
        <taxon>Aeromonadales</taxon>
        <taxon>Aeromonadaceae</taxon>
        <taxon>Tolumonas</taxon>
    </lineage>
</organism>
<sequence length="99" mass="11204">MPDQIQIEVVYALPMRQTTLTLKINTGSSVEDAIRESGILARHPEIDLAVNKVGLFGRAVALSTRLERPTRIEIYRPLLADPKEIRRQRAEKAKLQSLK</sequence>
<dbReference type="EMBL" id="CP001616">
    <property type="protein sequence ID" value="ACQ93860.1"/>
    <property type="molecule type" value="Genomic_DNA"/>
</dbReference>
<dbReference type="RefSeq" id="WP_015879328.1">
    <property type="nucleotide sequence ID" value="NC_012691.1"/>
</dbReference>
<dbReference type="SMR" id="C4L8Z0"/>
<dbReference type="STRING" id="595494.Tola_2262"/>
<dbReference type="KEGG" id="tau:Tola_2262"/>
<dbReference type="eggNOG" id="COG2914">
    <property type="taxonomic scope" value="Bacteria"/>
</dbReference>
<dbReference type="HOGENOM" id="CLU_150721_1_0_6"/>
<dbReference type="OrthoDB" id="9796575at2"/>
<dbReference type="Proteomes" id="UP000009073">
    <property type="component" value="Chromosome"/>
</dbReference>
<dbReference type="Gene3D" id="3.10.20.280">
    <property type="entry name" value="RnfH-like"/>
    <property type="match status" value="1"/>
</dbReference>
<dbReference type="HAMAP" id="MF_00460">
    <property type="entry name" value="UPF0125_RnfH"/>
    <property type="match status" value="1"/>
</dbReference>
<dbReference type="InterPro" id="IPR016155">
    <property type="entry name" value="Mopterin_synth/thiamin_S_b"/>
</dbReference>
<dbReference type="InterPro" id="IPR005346">
    <property type="entry name" value="RnfH"/>
</dbReference>
<dbReference type="InterPro" id="IPR037021">
    <property type="entry name" value="RnfH_sf"/>
</dbReference>
<dbReference type="NCBIfam" id="NF002490">
    <property type="entry name" value="PRK01777.1"/>
    <property type="match status" value="1"/>
</dbReference>
<dbReference type="PANTHER" id="PTHR37483">
    <property type="entry name" value="UPF0125 PROTEIN RATB"/>
    <property type="match status" value="1"/>
</dbReference>
<dbReference type="PANTHER" id="PTHR37483:SF1">
    <property type="entry name" value="UPF0125 PROTEIN RATB"/>
    <property type="match status" value="1"/>
</dbReference>
<dbReference type="Pfam" id="PF03658">
    <property type="entry name" value="Ub-RnfH"/>
    <property type="match status" value="1"/>
</dbReference>
<dbReference type="SUPFAM" id="SSF54285">
    <property type="entry name" value="MoaD/ThiS"/>
    <property type="match status" value="1"/>
</dbReference>
<feature type="chain" id="PRO_1000206291" description="Protein RnfH">
    <location>
        <begin position="1"/>
        <end position="99"/>
    </location>
</feature>
<proteinExistence type="inferred from homology"/>
<keyword id="KW-1185">Reference proteome</keyword>
<gene>
    <name evidence="1" type="primary">rnfH</name>
    <name type="ordered locus">Tola_2262</name>
</gene>
<reference key="1">
    <citation type="submission" date="2009-05" db="EMBL/GenBank/DDBJ databases">
        <title>Complete sequence of Tolumonas auensis DSM 9187.</title>
        <authorList>
            <consortium name="US DOE Joint Genome Institute"/>
            <person name="Lucas S."/>
            <person name="Copeland A."/>
            <person name="Lapidus A."/>
            <person name="Glavina del Rio T."/>
            <person name="Tice H."/>
            <person name="Bruce D."/>
            <person name="Goodwin L."/>
            <person name="Pitluck S."/>
            <person name="Chertkov O."/>
            <person name="Brettin T."/>
            <person name="Detter J.C."/>
            <person name="Han C."/>
            <person name="Larimer F."/>
            <person name="Land M."/>
            <person name="Hauser L."/>
            <person name="Kyrpides N."/>
            <person name="Mikhailova N."/>
            <person name="Spring S."/>
            <person name="Beller H."/>
        </authorList>
    </citation>
    <scope>NUCLEOTIDE SEQUENCE [LARGE SCALE GENOMIC DNA]</scope>
    <source>
        <strain>DSM 9187 / NBRC 110442 / TA 4</strain>
    </source>
</reference>
<accession>C4L8Z0</accession>
<protein>
    <recommendedName>
        <fullName evidence="1">Protein RnfH</fullName>
    </recommendedName>
</protein>
<comment type="similarity">
    <text evidence="1">Belongs to the UPF0125 (RnfH) family.</text>
</comment>
<evidence type="ECO:0000255" key="1">
    <source>
        <dbReference type="HAMAP-Rule" id="MF_00460"/>
    </source>
</evidence>
<name>RNFH_TOLAT</name>